<evidence type="ECO:0000250" key="1"/>
<evidence type="ECO:0000255" key="2">
    <source>
        <dbReference type="PROSITE-ProRule" id="PRU00047"/>
    </source>
</evidence>
<evidence type="ECO:0000256" key="3">
    <source>
        <dbReference type="SAM" id="MobiDB-lite"/>
    </source>
</evidence>
<evidence type="ECO:0000305" key="4"/>
<sequence length="441" mass="52102">MEETQQELTQQLKELETLMAAINLDDSKKKQPIYQNSSESEESETENKNFIYDFSSEEDFEEPVKVKIEEEAETSNKRKFDKNPEFTRFKYQKIPKEYVPAHQTTSTIGVLDIDCVANTEKIIKEWFNHHSILITINEELKNLSSLDTFYYLVYKTRGIAHAYLSNLPSEVLSRIPADRKQVDDWVYNLLLREFVGRLERPESEEAFSQNNYYKLINLEICNMCYLENFLCEFQSRYYGINPIDRENLKVDLLLYAKLPEYVRTQVEAYFNASITSNKLDNTLGGRITALKLWQTEQCNQKLAKRQASVGLCCSKIEDKIGKYGCRKSNPRAKKPKKKFRKIKKYPKKNFWKWNNQRKKKTFRKKRPFRKQQTCPTGKKKCQCWLCHEEGHYANECPKKDNKKAQTLKLIFDLGFEPVESDIETDEELFELTSEDSSEDEY</sequence>
<organism>
    <name type="scientific">Soybean chlorotic mottle virus</name>
    <dbReference type="NCBI Taxonomy" id="10651"/>
    <lineage>
        <taxon>Viruses</taxon>
        <taxon>Riboviria</taxon>
        <taxon>Pararnavirae</taxon>
        <taxon>Artverviricota</taxon>
        <taxon>Revtraviricetes</taxon>
        <taxon>Ortervirales</taxon>
        <taxon>Caulimoviridae</taxon>
        <taxon>Soymovirus</taxon>
        <taxon>Soymovirus maculaglycinis</taxon>
    </lineage>
</organism>
<name>CAPSD_SOCMV</name>
<comment type="function">
    <text evidence="1">Self assembles to form an icosahedral capsid, about 50 nm in diameter, nm, composed of 420 subunits of the viral capsid protein. The capsid encapsulates the genomic dsDNA. Following virus entry into host cell, provides nuclear import of the viral genome. Virus particles do not enter the nucleus, but dock at the nuclear membrane through the interaction with host importins (By similarity).</text>
</comment>
<comment type="subunit">
    <text evidence="1">Interacts (via nuclear localization signal) with host importin alpha.</text>
</comment>
<comment type="subcellular location">
    <subcellularLocation>
        <location evidence="4">Virion</location>
    </subcellularLocation>
    <subcellularLocation>
        <location evidence="4">Host nucleus</location>
    </subcellularLocation>
</comment>
<comment type="similarity">
    <text evidence="4">Belongs to the caulimoviridae capsid protein family.</text>
</comment>
<proteinExistence type="inferred from homology"/>
<protein>
    <recommendedName>
        <fullName>Capsid protein</fullName>
        <shortName>CP</shortName>
    </recommendedName>
    <alternativeName>
        <fullName>Coat protein</fullName>
    </alternativeName>
</protein>
<accession>P15627</accession>
<feature type="chain" id="PRO_0000222036" description="Capsid protein">
    <location>
        <begin position="1"/>
        <end position="441"/>
    </location>
</feature>
<feature type="zinc finger region" description="CCHC-type" evidence="2">
    <location>
        <begin position="381"/>
        <end position="398"/>
    </location>
</feature>
<feature type="region of interest" description="Disordered" evidence="3">
    <location>
        <begin position="26"/>
        <end position="63"/>
    </location>
</feature>
<feature type="short sequence motif" description="Nuclear localization signal" evidence="1">
    <location>
        <begin position="77"/>
        <end position="79"/>
    </location>
</feature>
<gene>
    <name type="ORF">ORF IV</name>
</gene>
<reference key="1">
    <citation type="journal article" date="1989" name="Nucleic Acids Res.">
        <title>The complete sequence of soybean chlorotic mottle virus DNA and the identification of a novel promoter.</title>
        <authorList>
            <person name="Hasegawa A."/>
            <person name="Verver J."/>
            <person name="Shimada A."/>
            <person name="Saito M."/>
            <person name="Goldbach R."/>
            <person name="van Kammen A."/>
            <person name="Miki K."/>
            <person name="Kameya-Iwaki M."/>
            <person name="Hibi T."/>
        </authorList>
    </citation>
    <scope>NUCLEOTIDE SEQUENCE [GENOMIC DNA]</scope>
</reference>
<reference key="2">
    <citation type="submission" date="2000-11" db="EMBL/GenBank/DDBJ databases">
        <authorList>
            <person name="Hibi T."/>
        </authorList>
    </citation>
    <scope>SEQUENCE REVISION</scope>
</reference>
<dbReference type="EMBL" id="X15828">
    <property type="protein sequence ID" value="CAC16944.1"/>
    <property type="molecule type" value="Genomic_DNA"/>
</dbReference>
<dbReference type="PIR" id="JS0374">
    <property type="entry name" value="JS0374"/>
</dbReference>
<dbReference type="SMR" id="P15627"/>
<dbReference type="KEGG" id="vg:912259"/>
<dbReference type="OrthoDB" id="22794at10239"/>
<dbReference type="Proteomes" id="UP000001065">
    <property type="component" value="Genome"/>
</dbReference>
<dbReference type="GO" id="GO:0043657">
    <property type="term" value="C:host cell"/>
    <property type="evidence" value="ECO:0007669"/>
    <property type="project" value="GOC"/>
</dbReference>
<dbReference type="GO" id="GO:0042025">
    <property type="term" value="C:host cell nucleus"/>
    <property type="evidence" value="ECO:0007669"/>
    <property type="project" value="UniProtKB-SubCell"/>
</dbReference>
<dbReference type="GO" id="GO:0039620">
    <property type="term" value="C:T=7 icosahedral viral capsid"/>
    <property type="evidence" value="ECO:0007669"/>
    <property type="project" value="UniProtKB-KW"/>
</dbReference>
<dbReference type="GO" id="GO:0003676">
    <property type="term" value="F:nucleic acid binding"/>
    <property type="evidence" value="ECO:0007669"/>
    <property type="project" value="InterPro"/>
</dbReference>
<dbReference type="GO" id="GO:0005198">
    <property type="term" value="F:structural molecule activity"/>
    <property type="evidence" value="ECO:0007669"/>
    <property type="project" value="InterPro"/>
</dbReference>
<dbReference type="GO" id="GO:0008270">
    <property type="term" value="F:zinc ion binding"/>
    <property type="evidence" value="ECO:0007669"/>
    <property type="project" value="UniProtKB-KW"/>
</dbReference>
<dbReference type="GO" id="GO:0046718">
    <property type="term" value="P:symbiont entry into host cell"/>
    <property type="evidence" value="ECO:0007669"/>
    <property type="project" value="UniProtKB-KW"/>
</dbReference>
<dbReference type="GO" id="GO:0075732">
    <property type="term" value="P:viral penetration into host nucleus"/>
    <property type="evidence" value="ECO:0007669"/>
    <property type="project" value="UniProtKB-KW"/>
</dbReference>
<dbReference type="InterPro" id="IPR001988">
    <property type="entry name" value="Caulimo_coat"/>
</dbReference>
<dbReference type="InterPro" id="IPR001878">
    <property type="entry name" value="Znf_CCHC"/>
</dbReference>
<dbReference type="InterPro" id="IPR036875">
    <property type="entry name" value="Znf_CCHC_sf"/>
</dbReference>
<dbReference type="Pfam" id="PF22909">
    <property type="entry name" value="Caulimovir_coat_dom"/>
    <property type="match status" value="1"/>
</dbReference>
<dbReference type="PRINTS" id="PR00221">
    <property type="entry name" value="CAULIMOCOAT"/>
</dbReference>
<dbReference type="SMART" id="SM00343">
    <property type="entry name" value="ZnF_C2HC"/>
    <property type="match status" value="1"/>
</dbReference>
<dbReference type="SUPFAM" id="SSF57756">
    <property type="entry name" value="Retrovirus zinc finger-like domains"/>
    <property type="match status" value="1"/>
</dbReference>
<dbReference type="PROSITE" id="PS50158">
    <property type="entry name" value="ZF_CCHC"/>
    <property type="match status" value="1"/>
</dbReference>
<keyword id="KW-0167">Capsid protein</keyword>
<keyword id="KW-1048">Host nucleus</keyword>
<keyword id="KW-0479">Metal-binding</keyword>
<keyword id="KW-1185">Reference proteome</keyword>
<keyword id="KW-1145">T=7 icosahedral capsid protein</keyword>
<keyword id="KW-1163">Viral penetration into host nucleus</keyword>
<keyword id="KW-0946">Virion</keyword>
<keyword id="KW-1160">Virus entry into host cell</keyword>
<keyword id="KW-0862">Zinc</keyword>
<keyword id="KW-0863">Zinc-finger</keyword>
<organismHost>
    <name type="scientific">Glycine max</name>
    <name type="common">Soybean</name>
    <name type="synonym">Glycine hispida</name>
    <dbReference type="NCBI Taxonomy" id="3847"/>
</organismHost>
<organismHost>
    <name type="scientific">Lablab purpureus</name>
    <name type="common">Hyacinth bean</name>
    <name type="synonym">Dolichos lablab</name>
    <dbReference type="NCBI Taxonomy" id="35936"/>
</organismHost>
<organismHost>
    <name type="scientific">Phaseolus vulgaris</name>
    <name type="common">Kidney bean</name>
    <name type="synonym">French bean</name>
    <dbReference type="NCBI Taxonomy" id="3885"/>
</organismHost>
<organismHost>
    <name type="scientific">Vigna unguiculata</name>
    <name type="common">Cowpea</name>
    <dbReference type="NCBI Taxonomy" id="3917"/>
</organismHost>